<accession>P75838</accession>
<accession>Q9R2W0</accession>
<keyword id="KW-0002">3D-structure</keyword>
<keyword id="KW-1185">Reference proteome</keyword>
<name>YCAO_ECOLI</name>
<comment type="function">
    <text evidence="2">Involved in beta-methylthiolation of ribosomal protein S12.</text>
</comment>
<comment type="subunit">
    <text evidence="2">Interacts with the ribosomal small subunit.</text>
</comment>
<comment type="disruption phenotype">
    <text evidence="2">Mutant shows a decrease in the ratio of methylthiolated to unmodified S12 and a decrease in transcription of a subset of genes.</text>
</comment>
<dbReference type="EMBL" id="U00096">
    <property type="protein sequence ID" value="AAC73991.2"/>
    <property type="molecule type" value="Genomic_DNA"/>
</dbReference>
<dbReference type="EMBL" id="AP009048">
    <property type="protein sequence ID" value="BAA35640.2"/>
    <property type="molecule type" value="Genomic_DNA"/>
</dbReference>
<dbReference type="PIR" id="H64829">
    <property type="entry name" value="H64829"/>
</dbReference>
<dbReference type="RefSeq" id="NP_415425.4">
    <property type="nucleotide sequence ID" value="NC_000913.3"/>
</dbReference>
<dbReference type="RefSeq" id="WP_001295344.1">
    <property type="nucleotide sequence ID" value="NZ_SSZK01000002.1"/>
</dbReference>
<dbReference type="PDB" id="4Q84">
    <property type="method" value="X-ray"/>
    <property type="resolution" value="2.64 A"/>
    <property type="chains" value="A/B=1-586"/>
</dbReference>
<dbReference type="PDB" id="4Q85">
    <property type="method" value="X-ray"/>
    <property type="resolution" value="3.29 A"/>
    <property type="chains" value="A/B/C/D/E/F/G/H=1-586"/>
</dbReference>
<dbReference type="PDB" id="4Q86">
    <property type="method" value="X-ray"/>
    <property type="resolution" value="2.25 A"/>
    <property type="chains" value="A/B/C/D/E/F/G/H=1-586"/>
</dbReference>
<dbReference type="PDBsum" id="4Q84"/>
<dbReference type="PDBsum" id="4Q85"/>
<dbReference type="PDBsum" id="4Q86"/>
<dbReference type="SMR" id="P75838"/>
<dbReference type="BioGRID" id="4260837">
    <property type="interactions" value="39"/>
</dbReference>
<dbReference type="DIP" id="DIP-11470N"/>
<dbReference type="FunCoup" id="P75838">
    <property type="interactions" value="128"/>
</dbReference>
<dbReference type="IntAct" id="P75838">
    <property type="interactions" value="8"/>
</dbReference>
<dbReference type="STRING" id="511145.b0905"/>
<dbReference type="jPOST" id="P75838"/>
<dbReference type="PaxDb" id="511145-b0905"/>
<dbReference type="EnsemblBacteria" id="AAC73991">
    <property type="protein sequence ID" value="AAC73991"/>
    <property type="gene ID" value="b0905"/>
</dbReference>
<dbReference type="GeneID" id="93776513"/>
<dbReference type="GeneID" id="945509"/>
<dbReference type="KEGG" id="ecj:JW0888"/>
<dbReference type="KEGG" id="eco:b0905"/>
<dbReference type="KEGG" id="ecoc:C3026_05585"/>
<dbReference type="PATRIC" id="fig|1411691.4.peg.1371"/>
<dbReference type="EchoBASE" id="EB3463"/>
<dbReference type="eggNOG" id="COG1944">
    <property type="taxonomic scope" value="Bacteria"/>
</dbReference>
<dbReference type="HOGENOM" id="CLU_022530_1_0_6"/>
<dbReference type="InParanoid" id="P75838"/>
<dbReference type="OMA" id="FRRMFGN"/>
<dbReference type="OrthoDB" id="9761274at2"/>
<dbReference type="PhylomeDB" id="P75838"/>
<dbReference type="BioCyc" id="EcoCyc:G6468-MONOMER"/>
<dbReference type="BioCyc" id="MetaCyc:G6468-MONOMER"/>
<dbReference type="EvolutionaryTrace" id="P75838"/>
<dbReference type="PRO" id="PR:P75838"/>
<dbReference type="Proteomes" id="UP000000625">
    <property type="component" value="Chromosome"/>
</dbReference>
<dbReference type="GO" id="GO:0005829">
    <property type="term" value="C:cytosol"/>
    <property type="evidence" value="ECO:0000314"/>
    <property type="project" value="EcoCyc"/>
</dbReference>
<dbReference type="GO" id="GO:0047693">
    <property type="term" value="F:ATP diphosphatase activity"/>
    <property type="evidence" value="ECO:0000314"/>
    <property type="project" value="EcoCyc"/>
</dbReference>
<dbReference type="GO" id="GO:0000287">
    <property type="term" value="F:magnesium ion binding"/>
    <property type="evidence" value="ECO:0000314"/>
    <property type="project" value="EcoCyc"/>
</dbReference>
<dbReference type="Gene3D" id="3.30.1330.230">
    <property type="match status" value="1"/>
</dbReference>
<dbReference type="InterPro" id="IPR003776">
    <property type="entry name" value="YcaO-like_dom"/>
</dbReference>
<dbReference type="InterPro" id="IPR041080">
    <property type="entry name" value="YcaO_C"/>
</dbReference>
<dbReference type="NCBIfam" id="TIGR00702">
    <property type="entry name" value="YcaO-type kinase domain"/>
    <property type="match status" value="1"/>
</dbReference>
<dbReference type="NCBIfam" id="NF040716">
    <property type="entry name" value="YcaO_for_S12"/>
    <property type="match status" value="1"/>
</dbReference>
<dbReference type="PANTHER" id="PTHR37809">
    <property type="entry name" value="RIBOSOMAL PROTEIN S12 METHYLTHIOTRANSFERASE ACCESSORY FACTOR YCAO"/>
    <property type="match status" value="1"/>
</dbReference>
<dbReference type="PANTHER" id="PTHR37809:SF1">
    <property type="entry name" value="RIBOSOMAL PROTEIN S12 METHYLTHIOTRANSFERASE ACCESSORY FACTOR YCAO"/>
    <property type="match status" value="1"/>
</dbReference>
<dbReference type="Pfam" id="PF02624">
    <property type="entry name" value="YcaO"/>
    <property type="match status" value="1"/>
</dbReference>
<dbReference type="Pfam" id="PF18381">
    <property type="entry name" value="YcaO_C"/>
    <property type="match status" value="1"/>
</dbReference>
<dbReference type="PROSITE" id="PS51664">
    <property type="entry name" value="YCAO"/>
    <property type="match status" value="1"/>
</dbReference>
<gene>
    <name type="primary">ycaO</name>
    <name type="ordered locus">b0905</name>
    <name type="ordered locus">JW0888</name>
</gene>
<organism>
    <name type="scientific">Escherichia coli (strain K12)</name>
    <dbReference type="NCBI Taxonomy" id="83333"/>
    <lineage>
        <taxon>Bacteria</taxon>
        <taxon>Pseudomonadati</taxon>
        <taxon>Pseudomonadota</taxon>
        <taxon>Gammaproteobacteria</taxon>
        <taxon>Enterobacterales</taxon>
        <taxon>Enterobacteriaceae</taxon>
        <taxon>Escherichia</taxon>
    </lineage>
</organism>
<evidence type="ECO:0000255" key="1">
    <source>
        <dbReference type="PROSITE-ProRule" id="PRU00999"/>
    </source>
</evidence>
<evidence type="ECO:0000269" key="2">
    <source>
    </source>
</evidence>
<evidence type="ECO:0007829" key="3">
    <source>
        <dbReference type="PDB" id="4Q85"/>
    </source>
</evidence>
<evidence type="ECO:0007829" key="4">
    <source>
        <dbReference type="PDB" id="4Q86"/>
    </source>
</evidence>
<proteinExistence type="evidence at protein level"/>
<sequence length="586" mass="65652">MTQTFIPGKDAALEDSIARFQQKLSDLGFQIEEASWLNPVPNVWSVHIRDKECALCFTNGKGATKKAALASALGEYFERLSTNYFFADFWLGETIANGPFVHYPNEKWFPLTENDDVPEGLLDDRLRAFYDPENELTGSMLIDLQSGNEDRGICGLPFTRQSDNQTVYIPMNIIGNLYVSNGMSAGNTRNEARVQGLSEVFERYVKNRIIAESISLPEIPADVLARYPAVVEAIETLEAEGFPIFAYDGSLGGQYPVICVVLFNPANGTCFASFGAHPDFGVALERTVTELLQGRGLKDLDVFTPPTFDDEEVAEHTNLETHFIDSSGLISWDLFKQDADYPFVDWNFSGTTEEEFATLMAIFNKEDKEVYIADYEHLGVYACRIIVPGMSDIYPAEDLWLANNSMGSHLRETILSLPGSEWEKEDYLNLIEQLDEEGFDDFTRVRELLGLATGSDNGWYTLRIGELKAMLALAGGDLEQALVWTEWTMEFNSSVFSPERANYYRCLQTLLLLAQEEDRQPLQYLNAFVRMYGADAVEAASAAMSGEAAFYGLQPVDSDLHAFAAHQSLLKAYEKLQRAKAAFWAK</sequence>
<feature type="chain" id="PRO_0000144976" description="Ribosomal protein S12 methylthiotransferase accessory factor YcaO">
    <location>
        <begin position="1"/>
        <end position="586"/>
    </location>
</feature>
<feature type="domain" description="YcaO" evidence="1">
    <location>
        <begin position="60"/>
        <end position="437"/>
    </location>
</feature>
<feature type="helix" evidence="4">
    <location>
        <begin position="13"/>
        <end position="27"/>
    </location>
</feature>
<feature type="strand" evidence="4">
    <location>
        <begin position="31"/>
        <end position="40"/>
    </location>
</feature>
<feature type="strand" evidence="4">
    <location>
        <begin position="43"/>
        <end position="50"/>
    </location>
</feature>
<feature type="strand" evidence="4">
    <location>
        <begin position="53"/>
        <end position="64"/>
    </location>
</feature>
<feature type="helix" evidence="4">
    <location>
        <begin position="65"/>
        <end position="81"/>
    </location>
</feature>
<feature type="helix" evidence="4">
    <location>
        <begin position="84"/>
        <end position="86"/>
    </location>
</feature>
<feature type="helix" evidence="4">
    <location>
        <begin position="92"/>
        <end position="97"/>
    </location>
</feature>
<feature type="strand" evidence="4">
    <location>
        <begin position="107"/>
        <end position="109"/>
    </location>
</feature>
<feature type="helix" evidence="4">
    <location>
        <begin position="124"/>
        <end position="130"/>
    </location>
</feature>
<feature type="helix" evidence="4">
    <location>
        <begin position="138"/>
        <end position="140"/>
    </location>
</feature>
<feature type="turn" evidence="4">
    <location>
        <begin position="144"/>
        <end position="146"/>
    </location>
</feature>
<feature type="turn" evidence="4">
    <location>
        <begin position="149"/>
        <end position="151"/>
    </location>
</feature>
<feature type="strand" evidence="4">
    <location>
        <begin position="153"/>
        <end position="160"/>
    </location>
</feature>
<feature type="turn" evidence="4">
    <location>
        <begin position="161"/>
        <end position="163"/>
    </location>
</feature>
<feature type="strand" evidence="4">
    <location>
        <begin position="166"/>
        <end position="170"/>
    </location>
</feature>
<feature type="helix" evidence="4">
    <location>
        <begin position="171"/>
        <end position="177"/>
    </location>
</feature>
<feature type="turn" evidence="4">
    <location>
        <begin position="178"/>
        <end position="182"/>
    </location>
</feature>
<feature type="strand" evidence="4">
    <location>
        <begin position="183"/>
        <end position="188"/>
    </location>
</feature>
<feature type="helix" evidence="4">
    <location>
        <begin position="189"/>
        <end position="211"/>
    </location>
</feature>
<feature type="helix" evidence="4">
    <location>
        <begin position="221"/>
        <end position="224"/>
    </location>
</feature>
<feature type="helix" evidence="4">
    <location>
        <begin position="228"/>
        <end position="239"/>
    </location>
</feature>
<feature type="strand" evidence="4">
    <location>
        <begin position="244"/>
        <end position="248"/>
    </location>
</feature>
<feature type="turn" evidence="4">
    <location>
        <begin position="251"/>
        <end position="254"/>
    </location>
</feature>
<feature type="strand" evidence="4">
    <location>
        <begin position="257"/>
        <end position="264"/>
    </location>
</feature>
<feature type="turn" evidence="4">
    <location>
        <begin position="265"/>
        <end position="268"/>
    </location>
</feature>
<feature type="strand" evidence="4">
    <location>
        <begin position="269"/>
        <end position="276"/>
    </location>
</feature>
<feature type="helix" evidence="4">
    <location>
        <begin position="280"/>
        <end position="291"/>
    </location>
</feature>
<feature type="turn" evidence="4">
    <location>
        <begin position="292"/>
        <end position="294"/>
    </location>
</feature>
<feature type="helix" evidence="4">
    <location>
        <begin position="310"/>
        <end position="314"/>
    </location>
</feature>
<feature type="helix" evidence="4">
    <location>
        <begin position="316"/>
        <end position="325"/>
    </location>
</feature>
<feature type="helix" evidence="4">
    <location>
        <begin position="332"/>
        <end position="335"/>
    </location>
</feature>
<feature type="helix" evidence="4">
    <location>
        <begin position="352"/>
        <end position="365"/>
    </location>
</feature>
<feature type="strand" evidence="4">
    <location>
        <begin position="371"/>
        <end position="375"/>
    </location>
</feature>
<feature type="strand" evidence="4">
    <location>
        <begin position="379"/>
        <end position="386"/>
    </location>
</feature>
<feature type="turn" evidence="4">
    <location>
        <begin position="388"/>
        <end position="390"/>
    </location>
</feature>
<feature type="helix" evidence="4">
    <location>
        <begin position="398"/>
        <end position="401"/>
    </location>
</feature>
<feature type="turn" evidence="4">
    <location>
        <begin position="404"/>
        <end position="407"/>
    </location>
</feature>
<feature type="helix" evidence="4">
    <location>
        <begin position="408"/>
        <end position="410"/>
    </location>
</feature>
<feature type="helix" evidence="4">
    <location>
        <begin position="411"/>
        <end position="415"/>
    </location>
</feature>
<feature type="turn" evidence="3">
    <location>
        <begin position="417"/>
        <end position="419"/>
    </location>
</feature>
<feature type="helix" evidence="4">
    <location>
        <begin position="424"/>
        <end position="436"/>
    </location>
</feature>
<feature type="helix" evidence="4">
    <location>
        <begin position="445"/>
        <end position="449"/>
    </location>
</feature>
<feature type="strand" evidence="4">
    <location>
        <begin position="455"/>
        <end position="457"/>
    </location>
</feature>
<feature type="helix" evidence="4">
    <location>
        <begin position="458"/>
        <end position="460"/>
    </location>
</feature>
<feature type="helix" evidence="4">
    <location>
        <begin position="464"/>
        <end position="474"/>
    </location>
</feature>
<feature type="helix" evidence="4">
    <location>
        <begin position="478"/>
        <end position="492"/>
    </location>
</feature>
<feature type="helix" evidence="4">
    <location>
        <begin position="493"/>
        <end position="495"/>
    </location>
</feature>
<feature type="helix" evidence="4">
    <location>
        <begin position="498"/>
        <end position="514"/>
    </location>
</feature>
<feature type="strand" evidence="3">
    <location>
        <begin position="517"/>
        <end position="519"/>
    </location>
</feature>
<feature type="helix" evidence="4">
    <location>
        <begin position="521"/>
        <end position="523"/>
    </location>
</feature>
<feature type="helix" evidence="4">
    <location>
        <begin position="525"/>
        <end position="532"/>
    </location>
</feature>
<feature type="helix" evidence="4">
    <location>
        <begin position="534"/>
        <end position="544"/>
    </location>
</feature>
<feature type="helix" evidence="4">
    <location>
        <begin position="564"/>
        <end position="582"/>
    </location>
</feature>
<protein>
    <recommendedName>
        <fullName>Ribosomal protein S12 methylthiotransferase accessory factor YcaO</fullName>
    </recommendedName>
</protein>
<reference key="1">
    <citation type="journal article" date="1996" name="DNA Res.">
        <title>A 718-kb DNA sequence of the Escherichia coli K-12 genome corresponding to the 12.7-28.0 min region on the linkage map.</title>
        <authorList>
            <person name="Oshima T."/>
            <person name="Aiba H."/>
            <person name="Baba T."/>
            <person name="Fujita K."/>
            <person name="Hayashi K."/>
            <person name="Honjo A."/>
            <person name="Ikemoto K."/>
            <person name="Inada T."/>
            <person name="Itoh T."/>
            <person name="Kajihara M."/>
            <person name="Kanai K."/>
            <person name="Kashimoto K."/>
            <person name="Kimura S."/>
            <person name="Kitagawa M."/>
            <person name="Makino K."/>
            <person name="Masuda S."/>
            <person name="Miki T."/>
            <person name="Mizobuchi K."/>
            <person name="Mori H."/>
            <person name="Motomura K."/>
            <person name="Nakamura Y."/>
            <person name="Nashimoto H."/>
            <person name="Nishio Y."/>
            <person name="Saito N."/>
            <person name="Sampei G."/>
            <person name="Seki Y."/>
            <person name="Tagami H."/>
            <person name="Takemoto K."/>
            <person name="Wada C."/>
            <person name="Yamamoto Y."/>
            <person name="Yano M."/>
            <person name="Horiuchi T."/>
        </authorList>
    </citation>
    <scope>NUCLEOTIDE SEQUENCE [LARGE SCALE GENOMIC DNA]</scope>
    <source>
        <strain>K12 / W3110 / ATCC 27325 / DSM 5911</strain>
    </source>
</reference>
<reference key="2">
    <citation type="journal article" date="1997" name="Science">
        <title>The complete genome sequence of Escherichia coli K-12.</title>
        <authorList>
            <person name="Blattner F.R."/>
            <person name="Plunkett G. III"/>
            <person name="Bloch C.A."/>
            <person name="Perna N.T."/>
            <person name="Burland V."/>
            <person name="Riley M."/>
            <person name="Collado-Vides J."/>
            <person name="Glasner J.D."/>
            <person name="Rode C.K."/>
            <person name="Mayhew G.F."/>
            <person name="Gregor J."/>
            <person name="Davis N.W."/>
            <person name="Kirkpatrick H.A."/>
            <person name="Goeden M.A."/>
            <person name="Rose D.J."/>
            <person name="Mau B."/>
            <person name="Shao Y."/>
        </authorList>
    </citation>
    <scope>NUCLEOTIDE SEQUENCE [LARGE SCALE GENOMIC DNA]</scope>
    <source>
        <strain>K12 / MG1655 / ATCC 47076</strain>
    </source>
</reference>
<reference key="3">
    <citation type="journal article" date="2006" name="Mol. Syst. Biol.">
        <title>Highly accurate genome sequences of Escherichia coli K-12 strains MG1655 and W3110.</title>
        <authorList>
            <person name="Hayashi K."/>
            <person name="Morooka N."/>
            <person name="Yamamoto Y."/>
            <person name="Fujita K."/>
            <person name="Isono K."/>
            <person name="Choi S."/>
            <person name="Ohtsubo E."/>
            <person name="Baba T."/>
            <person name="Wanner B.L."/>
            <person name="Mori H."/>
            <person name="Horiuchi T."/>
        </authorList>
    </citation>
    <scope>NUCLEOTIDE SEQUENCE [LARGE SCALE GENOMIC DNA]</scope>
    <source>
        <strain>K12 / W3110 / ATCC 27325 / DSM 5911</strain>
    </source>
</reference>
<reference key="4">
    <citation type="journal article" date="2011" name="Mol. Cell. Proteomics">
        <title>A proteomic and transcriptomic approach reveals new insight into beta-methylthiolation of Escherichia coli ribosomal protein S12.</title>
        <authorList>
            <person name="Strader M.B."/>
            <person name="Costantino N."/>
            <person name="Elkins C.A."/>
            <person name="Chen C.Y."/>
            <person name="Patel I."/>
            <person name="Makusky A.J."/>
            <person name="Choy J.S."/>
            <person name="Court D.L."/>
            <person name="Markey S.P."/>
            <person name="Kowalak J.A."/>
        </authorList>
    </citation>
    <scope>FUNCTION</scope>
    <scope>INTERACTION WITH RIBOSOME</scope>
    <scope>DISRUPTION PHENOTYPE</scope>
    <source>
        <strain>K12 / W3110 / ATCC 27325 / DSM 5911</strain>
    </source>
</reference>